<accession>Q83HY5</accession>
<gene>
    <name evidence="1" type="primary">atpE</name>
    <name type="ordered locus">TW339</name>
</gene>
<protein>
    <recommendedName>
        <fullName evidence="1">ATP synthase subunit c</fullName>
    </recommendedName>
    <alternativeName>
        <fullName evidence="1">ATP synthase F(0) sector subunit c</fullName>
    </alternativeName>
    <alternativeName>
        <fullName evidence="1">F-type ATPase subunit c</fullName>
        <shortName evidence="1">F-ATPase subunit c</shortName>
    </alternativeName>
    <alternativeName>
        <fullName evidence="1">Lipid-binding protein</fullName>
    </alternativeName>
</protein>
<sequence length="75" mass="7616">MGSVLAEVAGSLASIGYGLAAIGSAIGVGIVVGKTVESVARQPELAKRLTVLMYVGVAFTEALALIGIGTYFLFR</sequence>
<evidence type="ECO:0000255" key="1">
    <source>
        <dbReference type="HAMAP-Rule" id="MF_01396"/>
    </source>
</evidence>
<keyword id="KW-0066">ATP synthesis</keyword>
<keyword id="KW-1003">Cell membrane</keyword>
<keyword id="KW-0138">CF(0)</keyword>
<keyword id="KW-0375">Hydrogen ion transport</keyword>
<keyword id="KW-0406">Ion transport</keyword>
<keyword id="KW-0446">Lipid-binding</keyword>
<keyword id="KW-0472">Membrane</keyword>
<keyword id="KW-0812">Transmembrane</keyword>
<keyword id="KW-1133">Transmembrane helix</keyword>
<keyword id="KW-0813">Transport</keyword>
<name>ATPL_TROW8</name>
<proteinExistence type="inferred from homology"/>
<comment type="function">
    <text evidence="1">F(1)F(0) ATP synthase produces ATP from ADP in the presence of a proton or sodium gradient. F-type ATPases consist of two structural domains, F(1) containing the extramembraneous catalytic core and F(0) containing the membrane proton channel, linked together by a central stalk and a peripheral stalk. During catalysis, ATP synthesis in the catalytic domain of F(1) is coupled via a rotary mechanism of the central stalk subunits to proton translocation.</text>
</comment>
<comment type="function">
    <text evidence="1">Key component of the F(0) channel; it plays a direct role in translocation across the membrane. A homomeric c-ring of between 10-14 subunits forms the central stalk rotor element with the F(1) delta and epsilon subunits.</text>
</comment>
<comment type="subunit">
    <text evidence="1">F-type ATPases have 2 components, F(1) - the catalytic core - and F(0) - the membrane proton channel. F(1) has five subunits: alpha(3), beta(3), gamma(1), delta(1), epsilon(1). F(0) has three main subunits: a(1), b(2) and c(10-14). The alpha and beta chains form an alternating ring which encloses part of the gamma chain. F(1) is attached to F(0) by a central stalk formed by the gamma and epsilon chains, while a peripheral stalk is formed by the delta and b chains.</text>
</comment>
<comment type="subcellular location">
    <subcellularLocation>
        <location evidence="1">Cell membrane</location>
        <topology evidence="1">Multi-pass membrane protein</topology>
    </subcellularLocation>
</comment>
<comment type="similarity">
    <text evidence="1">Belongs to the ATPase C chain family.</text>
</comment>
<reference key="1">
    <citation type="journal article" date="2003" name="Lancet">
        <title>Sequencing and analysis of the genome of the Whipple's disease bacterium Tropheryma whipplei.</title>
        <authorList>
            <person name="Bentley S.D."/>
            <person name="Maiwald M."/>
            <person name="Murphy L.D."/>
            <person name="Pallen M.J."/>
            <person name="Yeats C.A."/>
            <person name="Dover L.G."/>
            <person name="Norbertczak H.T."/>
            <person name="Besra G.S."/>
            <person name="Quail M.A."/>
            <person name="Harris D.E."/>
            <person name="von Herbay A."/>
            <person name="Goble A."/>
            <person name="Rutter S."/>
            <person name="Squares R."/>
            <person name="Squares S."/>
            <person name="Barrell B.G."/>
            <person name="Parkhill J."/>
            <person name="Relman D.A."/>
        </authorList>
    </citation>
    <scope>NUCLEOTIDE SEQUENCE [LARGE SCALE GENOMIC DNA]</scope>
    <source>
        <strain>TW08/27</strain>
    </source>
</reference>
<feature type="chain" id="PRO_1000184525" description="ATP synthase subunit c">
    <location>
        <begin position="1"/>
        <end position="75"/>
    </location>
</feature>
<feature type="transmembrane region" description="Helical" evidence="1">
    <location>
        <begin position="12"/>
        <end position="32"/>
    </location>
</feature>
<feature type="transmembrane region" description="Helical" evidence="1">
    <location>
        <begin position="49"/>
        <end position="69"/>
    </location>
</feature>
<feature type="site" description="Reversibly protonated during proton transport" evidence="1">
    <location>
        <position position="61"/>
    </location>
</feature>
<organism>
    <name type="scientific">Tropheryma whipplei (strain TW08/27)</name>
    <name type="common">Whipple's bacillus</name>
    <dbReference type="NCBI Taxonomy" id="218496"/>
    <lineage>
        <taxon>Bacteria</taxon>
        <taxon>Bacillati</taxon>
        <taxon>Actinomycetota</taxon>
        <taxon>Actinomycetes</taxon>
        <taxon>Micrococcales</taxon>
        <taxon>Tropherymataceae</taxon>
        <taxon>Tropheryma</taxon>
    </lineage>
</organism>
<dbReference type="EMBL" id="BX251411">
    <property type="protein sequence ID" value="CAD67011.1"/>
    <property type="molecule type" value="Genomic_DNA"/>
</dbReference>
<dbReference type="RefSeq" id="WP_011096291.1">
    <property type="nucleotide sequence ID" value="NC_004551.1"/>
</dbReference>
<dbReference type="SMR" id="Q83HY5"/>
<dbReference type="GeneID" id="67388112"/>
<dbReference type="KEGG" id="tws:TW339"/>
<dbReference type="HOGENOM" id="CLU_148047_5_2_11"/>
<dbReference type="GO" id="GO:0005886">
    <property type="term" value="C:plasma membrane"/>
    <property type="evidence" value="ECO:0007669"/>
    <property type="project" value="UniProtKB-SubCell"/>
</dbReference>
<dbReference type="GO" id="GO:0045259">
    <property type="term" value="C:proton-transporting ATP synthase complex"/>
    <property type="evidence" value="ECO:0007669"/>
    <property type="project" value="UniProtKB-KW"/>
</dbReference>
<dbReference type="GO" id="GO:0033177">
    <property type="term" value="C:proton-transporting two-sector ATPase complex, proton-transporting domain"/>
    <property type="evidence" value="ECO:0007669"/>
    <property type="project" value="InterPro"/>
</dbReference>
<dbReference type="GO" id="GO:0008289">
    <property type="term" value="F:lipid binding"/>
    <property type="evidence" value="ECO:0007669"/>
    <property type="project" value="UniProtKB-KW"/>
</dbReference>
<dbReference type="GO" id="GO:0046933">
    <property type="term" value="F:proton-transporting ATP synthase activity, rotational mechanism"/>
    <property type="evidence" value="ECO:0007669"/>
    <property type="project" value="UniProtKB-UniRule"/>
</dbReference>
<dbReference type="CDD" id="cd18121">
    <property type="entry name" value="ATP-synt_Fo_c"/>
    <property type="match status" value="1"/>
</dbReference>
<dbReference type="FunFam" id="1.20.20.10:FF:000002">
    <property type="entry name" value="ATP synthase subunit c"/>
    <property type="match status" value="1"/>
</dbReference>
<dbReference type="Gene3D" id="1.20.20.10">
    <property type="entry name" value="F1F0 ATP synthase subunit C"/>
    <property type="match status" value="1"/>
</dbReference>
<dbReference type="HAMAP" id="MF_01396">
    <property type="entry name" value="ATP_synth_c_bact"/>
    <property type="match status" value="1"/>
</dbReference>
<dbReference type="InterPro" id="IPR005953">
    <property type="entry name" value="ATP_synth_csu_bac/chlpt"/>
</dbReference>
<dbReference type="InterPro" id="IPR000454">
    <property type="entry name" value="ATP_synth_F0_csu"/>
</dbReference>
<dbReference type="InterPro" id="IPR020537">
    <property type="entry name" value="ATP_synth_F0_csu_DDCD_BS"/>
</dbReference>
<dbReference type="InterPro" id="IPR038662">
    <property type="entry name" value="ATP_synth_F0_csu_sf"/>
</dbReference>
<dbReference type="InterPro" id="IPR002379">
    <property type="entry name" value="ATPase_proteolipid_c-like_dom"/>
</dbReference>
<dbReference type="InterPro" id="IPR035921">
    <property type="entry name" value="F/V-ATP_Csub_sf"/>
</dbReference>
<dbReference type="NCBIfam" id="TIGR01260">
    <property type="entry name" value="ATP_synt_c"/>
    <property type="match status" value="1"/>
</dbReference>
<dbReference type="PANTHER" id="PTHR10031">
    <property type="entry name" value="ATP SYNTHASE LIPID-BINDING PROTEIN, MITOCHONDRIAL"/>
    <property type="match status" value="1"/>
</dbReference>
<dbReference type="PANTHER" id="PTHR10031:SF0">
    <property type="entry name" value="ATPASE PROTEIN 9"/>
    <property type="match status" value="1"/>
</dbReference>
<dbReference type="Pfam" id="PF00137">
    <property type="entry name" value="ATP-synt_C"/>
    <property type="match status" value="1"/>
</dbReference>
<dbReference type="PRINTS" id="PR00124">
    <property type="entry name" value="ATPASEC"/>
</dbReference>
<dbReference type="SUPFAM" id="SSF81333">
    <property type="entry name" value="F1F0 ATP synthase subunit C"/>
    <property type="match status" value="1"/>
</dbReference>
<dbReference type="PROSITE" id="PS00605">
    <property type="entry name" value="ATPASE_C"/>
    <property type="match status" value="1"/>
</dbReference>